<dbReference type="EC" id="2.7.7.56" evidence="1"/>
<dbReference type="EMBL" id="CP000903">
    <property type="protein sequence ID" value="ABY45484.1"/>
    <property type="molecule type" value="Genomic_DNA"/>
</dbReference>
<dbReference type="RefSeq" id="WP_002015340.1">
    <property type="nucleotide sequence ID" value="NC_010184.1"/>
</dbReference>
<dbReference type="SMR" id="A9VIV4"/>
<dbReference type="GeneID" id="66265952"/>
<dbReference type="KEGG" id="bwe:BcerKBAB4_4325"/>
<dbReference type="eggNOG" id="COG0689">
    <property type="taxonomic scope" value="Bacteria"/>
</dbReference>
<dbReference type="HOGENOM" id="CLU_050858_0_0_9"/>
<dbReference type="Proteomes" id="UP000002154">
    <property type="component" value="Chromosome"/>
</dbReference>
<dbReference type="GO" id="GO:0000175">
    <property type="term" value="F:3'-5'-RNA exonuclease activity"/>
    <property type="evidence" value="ECO:0007669"/>
    <property type="project" value="UniProtKB-UniRule"/>
</dbReference>
<dbReference type="GO" id="GO:0000049">
    <property type="term" value="F:tRNA binding"/>
    <property type="evidence" value="ECO:0007669"/>
    <property type="project" value="UniProtKB-UniRule"/>
</dbReference>
<dbReference type="GO" id="GO:0009022">
    <property type="term" value="F:tRNA nucleotidyltransferase activity"/>
    <property type="evidence" value="ECO:0007669"/>
    <property type="project" value="UniProtKB-UniRule"/>
</dbReference>
<dbReference type="GO" id="GO:0016075">
    <property type="term" value="P:rRNA catabolic process"/>
    <property type="evidence" value="ECO:0007669"/>
    <property type="project" value="UniProtKB-UniRule"/>
</dbReference>
<dbReference type="GO" id="GO:0006364">
    <property type="term" value="P:rRNA processing"/>
    <property type="evidence" value="ECO:0007669"/>
    <property type="project" value="UniProtKB-KW"/>
</dbReference>
<dbReference type="GO" id="GO:0008033">
    <property type="term" value="P:tRNA processing"/>
    <property type="evidence" value="ECO:0007669"/>
    <property type="project" value="UniProtKB-UniRule"/>
</dbReference>
<dbReference type="CDD" id="cd11362">
    <property type="entry name" value="RNase_PH_bact"/>
    <property type="match status" value="1"/>
</dbReference>
<dbReference type="FunFam" id="3.30.230.70:FF:000003">
    <property type="entry name" value="Ribonuclease PH"/>
    <property type="match status" value="1"/>
</dbReference>
<dbReference type="Gene3D" id="3.30.230.70">
    <property type="entry name" value="GHMP Kinase, N-terminal domain"/>
    <property type="match status" value="1"/>
</dbReference>
<dbReference type="HAMAP" id="MF_00564">
    <property type="entry name" value="RNase_PH"/>
    <property type="match status" value="1"/>
</dbReference>
<dbReference type="InterPro" id="IPR001247">
    <property type="entry name" value="ExoRNase_PH_dom1"/>
</dbReference>
<dbReference type="InterPro" id="IPR015847">
    <property type="entry name" value="ExoRNase_PH_dom2"/>
</dbReference>
<dbReference type="InterPro" id="IPR036345">
    <property type="entry name" value="ExoRNase_PH_dom2_sf"/>
</dbReference>
<dbReference type="InterPro" id="IPR027408">
    <property type="entry name" value="PNPase/RNase_PH_dom_sf"/>
</dbReference>
<dbReference type="InterPro" id="IPR020568">
    <property type="entry name" value="Ribosomal_Su5_D2-typ_SF"/>
</dbReference>
<dbReference type="InterPro" id="IPR050080">
    <property type="entry name" value="RNase_PH"/>
</dbReference>
<dbReference type="InterPro" id="IPR002381">
    <property type="entry name" value="RNase_PH_bac-type"/>
</dbReference>
<dbReference type="InterPro" id="IPR018336">
    <property type="entry name" value="RNase_PH_CS"/>
</dbReference>
<dbReference type="NCBIfam" id="TIGR01966">
    <property type="entry name" value="RNasePH"/>
    <property type="match status" value="1"/>
</dbReference>
<dbReference type="PANTHER" id="PTHR11953">
    <property type="entry name" value="EXOSOME COMPLEX COMPONENT"/>
    <property type="match status" value="1"/>
</dbReference>
<dbReference type="PANTHER" id="PTHR11953:SF0">
    <property type="entry name" value="EXOSOME COMPLEX COMPONENT RRP41"/>
    <property type="match status" value="1"/>
</dbReference>
<dbReference type="Pfam" id="PF01138">
    <property type="entry name" value="RNase_PH"/>
    <property type="match status" value="1"/>
</dbReference>
<dbReference type="Pfam" id="PF03725">
    <property type="entry name" value="RNase_PH_C"/>
    <property type="match status" value="1"/>
</dbReference>
<dbReference type="SUPFAM" id="SSF55666">
    <property type="entry name" value="Ribonuclease PH domain 2-like"/>
    <property type="match status" value="1"/>
</dbReference>
<dbReference type="SUPFAM" id="SSF54211">
    <property type="entry name" value="Ribosomal protein S5 domain 2-like"/>
    <property type="match status" value="1"/>
</dbReference>
<dbReference type="PROSITE" id="PS01277">
    <property type="entry name" value="RIBONUCLEASE_PH"/>
    <property type="match status" value="1"/>
</dbReference>
<organism>
    <name type="scientific">Bacillus mycoides (strain KBAB4)</name>
    <name type="common">Bacillus weihenstephanensis</name>
    <dbReference type="NCBI Taxonomy" id="315730"/>
    <lineage>
        <taxon>Bacteria</taxon>
        <taxon>Bacillati</taxon>
        <taxon>Bacillota</taxon>
        <taxon>Bacilli</taxon>
        <taxon>Bacillales</taxon>
        <taxon>Bacillaceae</taxon>
        <taxon>Bacillus</taxon>
        <taxon>Bacillus cereus group</taxon>
    </lineage>
</organism>
<proteinExistence type="inferred from homology"/>
<feature type="chain" id="PRO_1000129322" description="Ribonuclease PH">
    <location>
        <begin position="1"/>
        <end position="245"/>
    </location>
</feature>
<feature type="binding site" evidence="1">
    <location>
        <position position="86"/>
    </location>
    <ligand>
        <name>phosphate</name>
        <dbReference type="ChEBI" id="CHEBI:43474"/>
        <note>substrate</note>
    </ligand>
</feature>
<feature type="binding site" evidence="1">
    <location>
        <begin position="124"/>
        <end position="126"/>
    </location>
    <ligand>
        <name>phosphate</name>
        <dbReference type="ChEBI" id="CHEBI:43474"/>
        <note>substrate</note>
    </ligand>
</feature>
<name>RNPH_BACMK</name>
<evidence type="ECO:0000255" key="1">
    <source>
        <dbReference type="HAMAP-Rule" id="MF_00564"/>
    </source>
</evidence>
<accession>A9VIV4</accession>
<reference key="1">
    <citation type="journal article" date="2008" name="Chem. Biol. Interact.">
        <title>Extending the Bacillus cereus group genomics to putative food-borne pathogens of different toxicity.</title>
        <authorList>
            <person name="Lapidus A."/>
            <person name="Goltsman E."/>
            <person name="Auger S."/>
            <person name="Galleron N."/>
            <person name="Segurens B."/>
            <person name="Dossat C."/>
            <person name="Land M.L."/>
            <person name="Broussolle V."/>
            <person name="Brillard J."/>
            <person name="Guinebretiere M.-H."/>
            <person name="Sanchis V."/>
            <person name="Nguen-the C."/>
            <person name="Lereclus D."/>
            <person name="Richardson P."/>
            <person name="Wincker P."/>
            <person name="Weissenbach J."/>
            <person name="Ehrlich S.D."/>
            <person name="Sorokin A."/>
        </authorList>
    </citation>
    <scope>NUCLEOTIDE SEQUENCE [LARGE SCALE GENOMIC DNA]</scope>
    <source>
        <strain>KBAB4</strain>
    </source>
</reference>
<keyword id="KW-0548">Nucleotidyltransferase</keyword>
<keyword id="KW-0694">RNA-binding</keyword>
<keyword id="KW-0698">rRNA processing</keyword>
<keyword id="KW-0808">Transferase</keyword>
<keyword id="KW-0819">tRNA processing</keyword>
<keyword id="KW-0820">tRNA-binding</keyword>
<comment type="function">
    <text evidence="1">Phosphorolytic 3'-5' exoribonuclease that plays an important role in tRNA 3'-end maturation. Removes nucleotide residues following the 3'-CCA terminus of tRNAs; can also add nucleotides to the ends of RNA molecules by using nucleoside diphosphates as substrates, but this may not be physiologically important. Probably plays a role in initiation of 16S rRNA degradation (leading to ribosome degradation) during starvation.</text>
</comment>
<comment type="catalytic activity">
    <reaction evidence="1">
        <text>tRNA(n+1) + phosphate = tRNA(n) + a ribonucleoside 5'-diphosphate</text>
        <dbReference type="Rhea" id="RHEA:10628"/>
        <dbReference type="Rhea" id="RHEA-COMP:17343"/>
        <dbReference type="Rhea" id="RHEA-COMP:17344"/>
        <dbReference type="ChEBI" id="CHEBI:43474"/>
        <dbReference type="ChEBI" id="CHEBI:57930"/>
        <dbReference type="ChEBI" id="CHEBI:173114"/>
        <dbReference type="EC" id="2.7.7.56"/>
    </reaction>
</comment>
<comment type="subunit">
    <text evidence="1">Homohexameric ring arranged as a trimer of dimers.</text>
</comment>
<comment type="similarity">
    <text evidence="1">Belongs to the RNase PH family.</text>
</comment>
<gene>
    <name evidence="1" type="primary">rph</name>
    <name type="ordered locus">BcerKBAB4_4325</name>
</gene>
<protein>
    <recommendedName>
        <fullName evidence="1">Ribonuclease PH</fullName>
        <shortName evidence="1">RNase PH</shortName>
        <ecNumber evidence="1">2.7.7.56</ecNumber>
    </recommendedName>
    <alternativeName>
        <fullName evidence="1">tRNA nucleotidyltransferase</fullName>
    </alternativeName>
</protein>
<sequence>MRVDGRGKAELRHIHIHTNYLKHPEGSVLIEVGDTKVICSATIEERVPPFMRGEGKGWVTAEYSMIPRATEQRTIRESSKGKVTGRTMEIQRLIGRALRAVVDLEALGERTVWIDCDVIQADGGTRTASITGAYVAMVLAFEKLLQAEKVSKIPVKDYLAATSVGVVEEQGVVLDLNYAEDSKADVDMNVIMTGKGQFVEVQGTGEEATFSRAELNELLDAAEQGIFQLVEKQKEALGDIVSHIE</sequence>